<organism>
    <name type="scientific">Mus musculus</name>
    <name type="common">Mouse</name>
    <dbReference type="NCBI Taxonomy" id="10090"/>
    <lineage>
        <taxon>Eukaryota</taxon>
        <taxon>Metazoa</taxon>
        <taxon>Chordata</taxon>
        <taxon>Craniata</taxon>
        <taxon>Vertebrata</taxon>
        <taxon>Euteleostomi</taxon>
        <taxon>Mammalia</taxon>
        <taxon>Eutheria</taxon>
        <taxon>Euarchontoglires</taxon>
        <taxon>Glires</taxon>
        <taxon>Rodentia</taxon>
        <taxon>Myomorpha</taxon>
        <taxon>Muroidea</taxon>
        <taxon>Muridae</taxon>
        <taxon>Murinae</taxon>
        <taxon>Mus</taxon>
        <taxon>Mus</taxon>
    </lineage>
</organism>
<name>NFIC_MOUSE</name>
<proteinExistence type="evidence at protein level"/>
<evidence type="ECO:0000250" key="1">
    <source>
        <dbReference type="UniProtKB" id="P08651"/>
    </source>
</evidence>
<evidence type="ECO:0000255" key="2">
    <source>
        <dbReference type="PROSITE-ProRule" id="PRU00436"/>
    </source>
</evidence>
<evidence type="ECO:0000256" key="3">
    <source>
        <dbReference type="SAM" id="MobiDB-lite"/>
    </source>
</evidence>
<evidence type="ECO:0000303" key="4">
    <source>
    </source>
</evidence>
<evidence type="ECO:0000305" key="5"/>
<evidence type="ECO:0007744" key="6">
    <source>
    </source>
</evidence>
<evidence type="ECO:0007744" key="7">
    <source>
    </source>
</evidence>
<evidence type="ECO:0007744" key="8">
    <source>
    </source>
</evidence>
<comment type="function">
    <text>Recognizes and binds the palindromic sequence 5'-TTGGCNNNNNGCCAA-3' present in viral and cellular promoters and in the origin of replication of adenovirus type 2. These proteins are individually capable of activating transcription and replication.</text>
</comment>
<comment type="subunit">
    <text>Binds DNA as a homodimer.</text>
</comment>
<comment type="subcellular location">
    <subcellularLocation>
        <location>Nucleus</location>
    </subcellularLocation>
</comment>
<comment type="alternative products">
    <event type="alternative splicing"/>
    <isoform>
        <id>P70255-1</id>
        <name>1</name>
        <name>C1A</name>
        <name>C2</name>
        <sequence type="displayed"/>
    </isoform>
    <isoform>
        <id>P70255-2</id>
        <name>2</name>
        <name>C1B</name>
        <sequence type="described" ref="VSP_003557"/>
    </isoform>
    <isoform>
        <id>P70255-3</id>
        <name>3</name>
        <name>C5</name>
        <sequence type="described" ref="VSP_007559"/>
    </isoform>
    <isoform>
        <id>P70255-4</id>
        <name>4</name>
        <name>C8</name>
        <sequence type="described" ref="VSP_007557"/>
    </isoform>
    <isoform>
        <id>P70255-5</id>
        <name>5</name>
        <name>C9</name>
        <sequence type="described" ref="VSP_007558"/>
    </isoform>
    <isoform>
        <id>P70255-6</id>
        <name>6</name>
        <name>C10</name>
        <sequence type="described" ref="VSP_007556"/>
    </isoform>
    <isoform>
        <id>P70255-7</id>
        <name>7</name>
        <name>C11</name>
        <sequence type="described" ref="VSP_007556 VSP_007559"/>
    </isoform>
</comment>
<comment type="tissue specificity">
    <text>Highest levels in skeletal muscle. Lower levels in heart, liver, kidney, lung and brain. Very low levels in testis and spleen.</text>
</comment>
<comment type="domain">
    <text evidence="1">The 9aaTAD motif is a transactivation domain present in a large number of yeast and animal transcription factors.</text>
</comment>
<comment type="similarity">
    <text evidence="2">Belongs to the CTF/NF-I family.</text>
</comment>
<gene>
    <name type="primary">Nfic</name>
</gene>
<dbReference type="EMBL" id="Y07692">
    <property type="protein sequence ID" value="CAA68956.1"/>
    <property type="molecule type" value="mRNA"/>
</dbReference>
<dbReference type="EMBL" id="Y07693">
    <property type="protein sequence ID" value="CAA68957.1"/>
    <property type="molecule type" value="mRNA"/>
</dbReference>
<dbReference type="EMBL" id="U57635">
    <property type="protein sequence ID" value="AAB49930.1"/>
    <property type="molecule type" value="mRNA"/>
</dbReference>
<dbReference type="EMBL" id="AK087539">
    <property type="protein sequence ID" value="BAC39918.1"/>
    <property type="molecule type" value="mRNA"/>
</dbReference>
<dbReference type="EMBL" id="AK155258">
    <property type="protein sequence ID" value="BAE33151.1"/>
    <property type="molecule type" value="mRNA"/>
</dbReference>
<dbReference type="EMBL" id="AF358455">
    <property type="protein sequence ID" value="AAK21331.1"/>
    <property type="molecule type" value="mRNA"/>
</dbReference>
<dbReference type="EMBL" id="AF358456">
    <property type="protein sequence ID" value="AAK21332.1"/>
    <property type="molecule type" value="mRNA"/>
</dbReference>
<dbReference type="EMBL" id="AF358457">
    <property type="protein sequence ID" value="AAK21333.1"/>
    <property type="molecule type" value="mRNA"/>
</dbReference>
<dbReference type="EMBL" id="AF358458">
    <property type="protein sequence ID" value="AAK21334.1"/>
    <property type="molecule type" value="mRNA"/>
</dbReference>
<dbReference type="EMBL" id="AF358459">
    <property type="protein sequence ID" value="AAK21335.1"/>
    <property type="molecule type" value="mRNA"/>
</dbReference>
<dbReference type="EMBL" id="AF358460">
    <property type="protein sequence ID" value="AAK21336.1"/>
    <property type="molecule type" value="mRNA"/>
</dbReference>
<dbReference type="EMBL" id="AF111265">
    <property type="protein sequence ID" value="AAD39100.1"/>
    <property type="molecule type" value="Genomic_DNA"/>
</dbReference>
<dbReference type="CCDS" id="CCDS24058.1">
    <molecule id="P70255-1"/>
</dbReference>
<dbReference type="CCDS" id="CCDS35999.1">
    <molecule id="P70255-3"/>
</dbReference>
<dbReference type="RefSeq" id="NP_032714.1">
    <molecule id="P70255-1"/>
    <property type="nucleotide sequence ID" value="NM_008688.3"/>
</dbReference>
<dbReference type="RefSeq" id="NP_081032.2">
    <molecule id="P70255-3"/>
    <property type="nucleotide sequence ID" value="NM_026756.2"/>
</dbReference>
<dbReference type="RefSeq" id="XP_006513398.1">
    <molecule id="P70255-2"/>
    <property type="nucleotide sequence ID" value="XM_006513335.4"/>
</dbReference>
<dbReference type="SMR" id="P70255"/>
<dbReference type="BioGRID" id="201748">
    <property type="interactions" value="4"/>
</dbReference>
<dbReference type="FunCoup" id="P70255">
    <property type="interactions" value="1647"/>
</dbReference>
<dbReference type="IntAct" id="P70255">
    <property type="interactions" value="1"/>
</dbReference>
<dbReference type="STRING" id="10090.ENSMUSP00000020461"/>
<dbReference type="iPTMnet" id="P70255"/>
<dbReference type="PhosphoSitePlus" id="P70255"/>
<dbReference type="SwissPalm" id="P70255"/>
<dbReference type="jPOST" id="P70255"/>
<dbReference type="PaxDb" id="10090-ENSMUSP00000020461"/>
<dbReference type="PeptideAtlas" id="P70255"/>
<dbReference type="ProteomicsDB" id="293543">
    <molecule id="P70255-1"/>
</dbReference>
<dbReference type="ProteomicsDB" id="293544">
    <molecule id="P70255-2"/>
</dbReference>
<dbReference type="ProteomicsDB" id="293545">
    <molecule id="P70255-3"/>
</dbReference>
<dbReference type="ProteomicsDB" id="293546">
    <molecule id="P70255-4"/>
</dbReference>
<dbReference type="ProteomicsDB" id="293547">
    <molecule id="P70255-5"/>
</dbReference>
<dbReference type="ProteomicsDB" id="293548">
    <molecule id="P70255-6"/>
</dbReference>
<dbReference type="ProteomicsDB" id="293549">
    <molecule id="P70255-7"/>
</dbReference>
<dbReference type="Pumba" id="P70255"/>
<dbReference type="Antibodypedia" id="23195">
    <property type="antibodies" value="312 antibodies from 31 providers"/>
</dbReference>
<dbReference type="DNASU" id="18029"/>
<dbReference type="Ensembl" id="ENSMUST00000020461.15">
    <molecule id="P70255-1"/>
    <property type="protein sequence ID" value="ENSMUSP00000020461.9"/>
    <property type="gene ID" value="ENSMUSG00000055053.19"/>
</dbReference>
<dbReference type="Ensembl" id="ENSMUST00000078185.14">
    <molecule id="P70255-4"/>
    <property type="protein sequence ID" value="ENSMUSP00000077317.8"/>
    <property type="gene ID" value="ENSMUSG00000055053.19"/>
</dbReference>
<dbReference type="Ensembl" id="ENSMUST00000105321.10">
    <molecule id="P70255-3"/>
    <property type="protein sequence ID" value="ENSMUSP00000100958.4"/>
    <property type="gene ID" value="ENSMUSG00000055053.19"/>
</dbReference>
<dbReference type="Ensembl" id="ENSMUST00000117966.2">
    <molecule id="P70255-2"/>
    <property type="protein sequence ID" value="ENSMUSP00000113046.2"/>
    <property type="gene ID" value="ENSMUSG00000055053.19"/>
</dbReference>
<dbReference type="GeneID" id="18029"/>
<dbReference type="KEGG" id="mmu:18029"/>
<dbReference type="UCSC" id="uc007ghx.1">
    <molecule id="P70255-4"/>
    <property type="organism name" value="mouse"/>
</dbReference>
<dbReference type="UCSC" id="uc007ghy.1">
    <molecule id="P70255-1"/>
    <property type="organism name" value="mouse"/>
</dbReference>
<dbReference type="UCSC" id="uc007gia.1">
    <molecule id="P70255-2"/>
    <property type="organism name" value="mouse"/>
</dbReference>
<dbReference type="AGR" id="MGI:109591"/>
<dbReference type="CTD" id="4782"/>
<dbReference type="MGI" id="MGI:109591">
    <property type="gene designation" value="Nfic"/>
</dbReference>
<dbReference type="VEuPathDB" id="HostDB:ENSMUSG00000055053"/>
<dbReference type="eggNOG" id="KOG3663">
    <property type="taxonomic scope" value="Eukaryota"/>
</dbReference>
<dbReference type="GeneTree" id="ENSGT00950000182916"/>
<dbReference type="HOGENOM" id="CLU_012576_3_0_1"/>
<dbReference type="InParanoid" id="P70255"/>
<dbReference type="OMA" id="YFVRERX"/>
<dbReference type="OrthoDB" id="62397at9989"/>
<dbReference type="PhylomeDB" id="P70255"/>
<dbReference type="TreeFam" id="TF313889"/>
<dbReference type="BioGRID-ORCS" id="18029">
    <property type="hits" value="3 hits in 79 CRISPR screens"/>
</dbReference>
<dbReference type="ChiTaRS" id="Nfic">
    <property type="organism name" value="mouse"/>
</dbReference>
<dbReference type="PRO" id="PR:P70255"/>
<dbReference type="Proteomes" id="UP000000589">
    <property type="component" value="Chromosome 10"/>
</dbReference>
<dbReference type="RNAct" id="P70255">
    <property type="molecule type" value="protein"/>
</dbReference>
<dbReference type="Bgee" id="ENSMUSG00000055053">
    <property type="expression patterns" value="Expressed in tarsal region and 249 other cell types or tissues"/>
</dbReference>
<dbReference type="ExpressionAtlas" id="P70255">
    <property type="expression patterns" value="baseline and differential"/>
</dbReference>
<dbReference type="GO" id="GO:0001650">
    <property type="term" value="C:fibrillar center"/>
    <property type="evidence" value="ECO:0007669"/>
    <property type="project" value="Ensembl"/>
</dbReference>
<dbReference type="GO" id="GO:0005654">
    <property type="term" value="C:nucleoplasm"/>
    <property type="evidence" value="ECO:0007669"/>
    <property type="project" value="Ensembl"/>
</dbReference>
<dbReference type="GO" id="GO:0001228">
    <property type="term" value="F:DNA-binding transcription activator activity, RNA polymerase II-specific"/>
    <property type="evidence" value="ECO:0007669"/>
    <property type="project" value="Ensembl"/>
</dbReference>
<dbReference type="GO" id="GO:0003700">
    <property type="term" value="F:DNA-binding transcription factor activity"/>
    <property type="evidence" value="ECO:0000266"/>
    <property type="project" value="MGI"/>
</dbReference>
<dbReference type="GO" id="GO:0000978">
    <property type="term" value="F:RNA polymerase II cis-regulatory region sequence-specific DNA binding"/>
    <property type="evidence" value="ECO:0007669"/>
    <property type="project" value="Ensembl"/>
</dbReference>
<dbReference type="GO" id="GO:0006260">
    <property type="term" value="P:DNA replication"/>
    <property type="evidence" value="ECO:0007669"/>
    <property type="project" value="UniProtKB-KW"/>
</dbReference>
<dbReference type="GO" id="GO:0000122">
    <property type="term" value="P:negative regulation of transcription by RNA polymerase II"/>
    <property type="evidence" value="ECO:0000314"/>
    <property type="project" value="UniProtKB"/>
</dbReference>
<dbReference type="GO" id="GO:0042475">
    <property type="term" value="P:odontogenesis of dentin-containing tooth"/>
    <property type="evidence" value="ECO:0000315"/>
    <property type="project" value="MGI"/>
</dbReference>
<dbReference type="GO" id="GO:0045944">
    <property type="term" value="P:positive regulation of transcription by RNA polymerase II"/>
    <property type="evidence" value="ECO:0000314"/>
    <property type="project" value="UniProtKB"/>
</dbReference>
<dbReference type="InterPro" id="IPR000647">
    <property type="entry name" value="CTF/NFI"/>
</dbReference>
<dbReference type="InterPro" id="IPR020604">
    <property type="entry name" value="CTF/NFI_DNA-bd-dom"/>
</dbReference>
<dbReference type="InterPro" id="IPR019739">
    <property type="entry name" value="CTF/NFI_DNA-bd_CS"/>
</dbReference>
<dbReference type="InterPro" id="IPR019548">
    <property type="entry name" value="CTF/NFI_DNA-bd_N"/>
</dbReference>
<dbReference type="InterPro" id="IPR003619">
    <property type="entry name" value="MAD_homology1_Dwarfin-type"/>
</dbReference>
<dbReference type="PANTHER" id="PTHR11492:SF9">
    <property type="entry name" value="NUCLEAR FACTOR 1 C-TYPE"/>
    <property type="match status" value="1"/>
</dbReference>
<dbReference type="PANTHER" id="PTHR11492">
    <property type="entry name" value="NUCLEAR FACTOR I"/>
    <property type="match status" value="1"/>
</dbReference>
<dbReference type="Pfam" id="PF00859">
    <property type="entry name" value="CTF_NFI"/>
    <property type="match status" value="1"/>
</dbReference>
<dbReference type="Pfam" id="PF03165">
    <property type="entry name" value="MH1"/>
    <property type="match status" value="1"/>
</dbReference>
<dbReference type="Pfam" id="PF10524">
    <property type="entry name" value="NfI_DNAbd_pre-N"/>
    <property type="match status" value="1"/>
</dbReference>
<dbReference type="SMART" id="SM00523">
    <property type="entry name" value="DWA"/>
    <property type="match status" value="1"/>
</dbReference>
<dbReference type="PROSITE" id="PS00349">
    <property type="entry name" value="CTF_NFI_1"/>
    <property type="match status" value="1"/>
</dbReference>
<dbReference type="PROSITE" id="PS51080">
    <property type="entry name" value="CTF_NFI_2"/>
    <property type="match status" value="1"/>
</dbReference>
<feature type="chain" id="PRO_0000100200" description="Nuclear factor 1 C-type">
    <location>
        <begin position="1"/>
        <end position="439"/>
    </location>
</feature>
<feature type="DNA-binding region" description="CTF/NF-I" evidence="2">
    <location>
        <begin position="1"/>
        <end position="195"/>
    </location>
</feature>
<feature type="region of interest" description="Disordered" evidence="3">
    <location>
        <begin position="265"/>
        <end position="348"/>
    </location>
</feature>
<feature type="region of interest" description="Disordered" evidence="3">
    <location>
        <begin position="415"/>
        <end position="439"/>
    </location>
</feature>
<feature type="short sequence motif" description="9aaTAD" evidence="1">
    <location>
        <begin position="404"/>
        <end position="412"/>
    </location>
</feature>
<feature type="compositionally biased region" description="Low complexity" evidence="3">
    <location>
        <begin position="299"/>
        <end position="312"/>
    </location>
</feature>
<feature type="compositionally biased region" description="Polar residues" evidence="3">
    <location>
        <begin position="334"/>
        <end position="348"/>
    </location>
</feature>
<feature type="modified residue" description="N-acetylmethionine" evidence="1">
    <location>
        <position position="1"/>
    </location>
</feature>
<feature type="modified residue" description="Phosphoserine" evidence="1">
    <location>
        <position position="194"/>
    </location>
</feature>
<feature type="modified residue" description="Phosphoserine" evidence="1">
    <location>
        <position position="294"/>
    </location>
</feature>
<feature type="modified residue" description="Phosphotyrosine" evidence="8">
    <location>
        <position position="300"/>
    </location>
</feature>
<feature type="modified residue" description="Phosphoserine" evidence="8">
    <location>
        <position position="302"/>
    </location>
</feature>
<feature type="modified residue" description="Phosphoserine" evidence="8">
    <location>
        <position position="305"/>
    </location>
</feature>
<feature type="modified residue" description="Phosphoserine" evidence="6 8">
    <location>
        <position position="323"/>
    </location>
</feature>
<feature type="modified residue" description="Phosphoserine" evidence="6 8">
    <location>
        <position position="333"/>
    </location>
</feature>
<feature type="modified residue" description="Phosphoserine" evidence="8">
    <location>
        <position position="337"/>
    </location>
</feature>
<feature type="modified residue" description="Phosphoserine" evidence="6 7 8">
    <location>
        <position position="339"/>
    </location>
</feature>
<feature type="modified residue" description="Phosphoserine" evidence="6 8">
    <location>
        <position position="343"/>
    </location>
</feature>
<feature type="modified residue" description="Asymmetric dimethylarginine; alternate" evidence="1">
    <location>
        <position position="365"/>
    </location>
</feature>
<feature type="modified residue" description="Omega-N-methylarginine; alternate" evidence="1">
    <location>
        <position position="365"/>
    </location>
</feature>
<feature type="modified residue" description="Asymmetric dimethylarginine" evidence="1">
    <location>
        <position position="395"/>
    </location>
</feature>
<feature type="splice variant" id="VSP_003557" description="In isoform 2." evidence="4">
    <original>MYSSPLCLTQ</original>
    <variation>M</variation>
    <location>
        <begin position="1"/>
        <end position="10"/>
    </location>
</feature>
<feature type="splice variant" id="VSP_007556" description="In isoform 6 and isoform 7." evidence="5">
    <location>
        <begin position="247"/>
        <end position="374"/>
    </location>
</feature>
<feature type="splice variant" id="VSP_007557" description="In isoform 4." evidence="5">
    <location>
        <begin position="320"/>
        <end position="361"/>
    </location>
</feature>
<feature type="splice variant" id="VSP_007558" description="In isoform 5." evidence="5">
    <location>
        <begin position="362"/>
        <end position="423"/>
    </location>
</feature>
<feature type="splice variant" id="VSP_007559" description="In isoform 3 and isoform 7." evidence="5">
    <original>PALRPTRPLQTVPLWD</original>
    <variation>SWYLG</variation>
    <location>
        <begin position="424"/>
        <end position="439"/>
    </location>
</feature>
<keyword id="KW-0007">Acetylation</keyword>
<keyword id="KW-0010">Activator</keyword>
<keyword id="KW-0025">Alternative splicing</keyword>
<keyword id="KW-0235">DNA replication</keyword>
<keyword id="KW-0238">DNA-binding</keyword>
<keyword id="KW-0488">Methylation</keyword>
<keyword id="KW-0539">Nucleus</keyword>
<keyword id="KW-0597">Phosphoprotein</keyword>
<keyword id="KW-1185">Reference proteome</keyword>
<keyword id="KW-0804">Transcription</keyword>
<keyword id="KW-0805">Transcription regulation</keyword>
<reference key="1">
    <citation type="journal article" date="2003" name="Gene">
        <title>Genomic organization, splice products and mouse chromosomal localization of genes for transcription factor Nuclear Factor One.</title>
        <authorList>
            <person name="Gruender A."/>
            <person name="Qian F."/>
            <person name="Ebel T.T."/>
            <person name="Mincheva A."/>
            <person name="Lichter P."/>
            <person name="Kruse U."/>
            <person name="Sippel A.E."/>
        </authorList>
    </citation>
    <scope>NUCLEOTIDE SEQUENCE [MRNA] (ISOFORMS 1 AND 2)</scope>
    <source>
        <strain>NIH Swiss</strain>
    </source>
</reference>
<reference key="2">
    <citation type="journal article" date="1997" name="Dev. Dyn.">
        <title>Expression patterns of the four nuclear factor I genes during mouse embryogenesis indicate a potential role in development.</title>
        <authorList>
            <person name="Chaudhry A.Z."/>
            <person name="Lyons G.E."/>
            <person name="Gronostajski R.M."/>
        </authorList>
    </citation>
    <scope>NUCLEOTIDE SEQUENCE [MRNA] (ISOFORM 1)</scope>
    <source>
        <strain>BALB/cJ</strain>
        <tissue>Liver</tissue>
        <tissue>Skeletal muscle</tissue>
    </source>
</reference>
<reference key="3">
    <citation type="journal article" date="2005" name="Science">
        <title>The transcriptional landscape of the mammalian genome.</title>
        <authorList>
            <person name="Carninci P."/>
            <person name="Kasukawa T."/>
            <person name="Katayama S."/>
            <person name="Gough J."/>
            <person name="Frith M.C."/>
            <person name="Maeda N."/>
            <person name="Oyama R."/>
            <person name="Ravasi T."/>
            <person name="Lenhard B."/>
            <person name="Wells C."/>
            <person name="Kodzius R."/>
            <person name="Shimokawa K."/>
            <person name="Bajic V.B."/>
            <person name="Brenner S.E."/>
            <person name="Batalov S."/>
            <person name="Forrest A.R."/>
            <person name="Zavolan M."/>
            <person name="Davis M.J."/>
            <person name="Wilming L.G."/>
            <person name="Aidinis V."/>
            <person name="Allen J.E."/>
            <person name="Ambesi-Impiombato A."/>
            <person name="Apweiler R."/>
            <person name="Aturaliya R.N."/>
            <person name="Bailey T.L."/>
            <person name="Bansal M."/>
            <person name="Baxter L."/>
            <person name="Beisel K.W."/>
            <person name="Bersano T."/>
            <person name="Bono H."/>
            <person name="Chalk A.M."/>
            <person name="Chiu K.P."/>
            <person name="Choudhary V."/>
            <person name="Christoffels A."/>
            <person name="Clutterbuck D.R."/>
            <person name="Crowe M.L."/>
            <person name="Dalla E."/>
            <person name="Dalrymple B.P."/>
            <person name="de Bono B."/>
            <person name="Della Gatta G."/>
            <person name="di Bernardo D."/>
            <person name="Down T."/>
            <person name="Engstrom P."/>
            <person name="Fagiolini M."/>
            <person name="Faulkner G."/>
            <person name="Fletcher C.F."/>
            <person name="Fukushima T."/>
            <person name="Furuno M."/>
            <person name="Futaki S."/>
            <person name="Gariboldi M."/>
            <person name="Georgii-Hemming P."/>
            <person name="Gingeras T.R."/>
            <person name="Gojobori T."/>
            <person name="Green R.E."/>
            <person name="Gustincich S."/>
            <person name="Harbers M."/>
            <person name="Hayashi Y."/>
            <person name="Hensch T.K."/>
            <person name="Hirokawa N."/>
            <person name="Hill D."/>
            <person name="Huminiecki L."/>
            <person name="Iacono M."/>
            <person name="Ikeo K."/>
            <person name="Iwama A."/>
            <person name="Ishikawa T."/>
            <person name="Jakt M."/>
            <person name="Kanapin A."/>
            <person name="Katoh M."/>
            <person name="Kawasawa Y."/>
            <person name="Kelso J."/>
            <person name="Kitamura H."/>
            <person name="Kitano H."/>
            <person name="Kollias G."/>
            <person name="Krishnan S.P."/>
            <person name="Kruger A."/>
            <person name="Kummerfeld S.K."/>
            <person name="Kurochkin I.V."/>
            <person name="Lareau L.F."/>
            <person name="Lazarevic D."/>
            <person name="Lipovich L."/>
            <person name="Liu J."/>
            <person name="Liuni S."/>
            <person name="McWilliam S."/>
            <person name="Madan Babu M."/>
            <person name="Madera M."/>
            <person name="Marchionni L."/>
            <person name="Matsuda H."/>
            <person name="Matsuzawa S."/>
            <person name="Miki H."/>
            <person name="Mignone F."/>
            <person name="Miyake S."/>
            <person name="Morris K."/>
            <person name="Mottagui-Tabar S."/>
            <person name="Mulder N."/>
            <person name="Nakano N."/>
            <person name="Nakauchi H."/>
            <person name="Ng P."/>
            <person name="Nilsson R."/>
            <person name="Nishiguchi S."/>
            <person name="Nishikawa S."/>
            <person name="Nori F."/>
            <person name="Ohara O."/>
            <person name="Okazaki Y."/>
            <person name="Orlando V."/>
            <person name="Pang K.C."/>
            <person name="Pavan W.J."/>
            <person name="Pavesi G."/>
            <person name="Pesole G."/>
            <person name="Petrovsky N."/>
            <person name="Piazza S."/>
            <person name="Reed J."/>
            <person name="Reid J.F."/>
            <person name="Ring B.Z."/>
            <person name="Ringwald M."/>
            <person name="Rost B."/>
            <person name="Ruan Y."/>
            <person name="Salzberg S.L."/>
            <person name="Sandelin A."/>
            <person name="Schneider C."/>
            <person name="Schoenbach C."/>
            <person name="Sekiguchi K."/>
            <person name="Semple C.A."/>
            <person name="Seno S."/>
            <person name="Sessa L."/>
            <person name="Sheng Y."/>
            <person name="Shibata Y."/>
            <person name="Shimada H."/>
            <person name="Shimada K."/>
            <person name="Silva D."/>
            <person name="Sinclair B."/>
            <person name="Sperling S."/>
            <person name="Stupka E."/>
            <person name="Sugiura K."/>
            <person name="Sultana R."/>
            <person name="Takenaka Y."/>
            <person name="Taki K."/>
            <person name="Tammoja K."/>
            <person name="Tan S.L."/>
            <person name="Tang S."/>
            <person name="Taylor M.S."/>
            <person name="Tegner J."/>
            <person name="Teichmann S.A."/>
            <person name="Ueda H.R."/>
            <person name="van Nimwegen E."/>
            <person name="Verardo R."/>
            <person name="Wei C.L."/>
            <person name="Yagi K."/>
            <person name="Yamanishi H."/>
            <person name="Zabarovsky E."/>
            <person name="Zhu S."/>
            <person name="Zimmer A."/>
            <person name="Hide W."/>
            <person name="Bult C."/>
            <person name="Grimmond S.M."/>
            <person name="Teasdale R.D."/>
            <person name="Liu E.T."/>
            <person name="Brusic V."/>
            <person name="Quackenbush J."/>
            <person name="Wahlestedt C."/>
            <person name="Mattick J.S."/>
            <person name="Hume D.A."/>
            <person name="Kai C."/>
            <person name="Sasaki D."/>
            <person name="Tomaru Y."/>
            <person name="Fukuda S."/>
            <person name="Kanamori-Katayama M."/>
            <person name="Suzuki M."/>
            <person name="Aoki J."/>
            <person name="Arakawa T."/>
            <person name="Iida J."/>
            <person name="Imamura K."/>
            <person name="Itoh M."/>
            <person name="Kato T."/>
            <person name="Kawaji H."/>
            <person name="Kawagashira N."/>
            <person name="Kawashima T."/>
            <person name="Kojima M."/>
            <person name="Kondo S."/>
            <person name="Konno H."/>
            <person name="Nakano K."/>
            <person name="Ninomiya N."/>
            <person name="Nishio T."/>
            <person name="Okada M."/>
            <person name="Plessy C."/>
            <person name="Shibata K."/>
            <person name="Shiraki T."/>
            <person name="Suzuki S."/>
            <person name="Tagami M."/>
            <person name="Waki K."/>
            <person name="Watahiki A."/>
            <person name="Okamura-Oho Y."/>
            <person name="Suzuki H."/>
            <person name="Kawai J."/>
            <person name="Hayashizaki Y."/>
        </authorList>
    </citation>
    <scope>NUCLEOTIDE SEQUENCE [LARGE SCALE MRNA] (ISOFORM 1)</scope>
    <source>
        <strain>C57BL/6J</strain>
        <strain>NOD</strain>
        <tissue>Eye</tissue>
    </source>
</reference>
<reference key="4">
    <citation type="submission" date="2001-03" db="EMBL/GenBank/DDBJ databases">
        <authorList>
            <person name="Kane R."/>
            <person name="Martin F."/>
        </authorList>
    </citation>
    <scope>NUCLEOTIDE SEQUENCE OF 179-439 (ISOFORMS 1; 3; 4; 5; 6 AND 7)</scope>
    <source>
        <strain>CD-1</strain>
        <tissue>Mammary gland</tissue>
    </source>
</reference>
<reference key="5">
    <citation type="journal article" date="1999" name="Mamm. Genome">
        <title>Exon structure of the nuclear factor I DNA-binding domain from C. elegans to mammals.</title>
        <authorList>
            <person name="Fletcher C.F."/>
            <person name="Jenkins N.A."/>
            <person name="Copeland N.G."/>
            <person name="Chaudhry A.Z."/>
            <person name="Gronostajski R.M."/>
        </authorList>
    </citation>
    <scope>NUCLEOTIDE SEQUENCE OF 11-187</scope>
    <source>
        <strain>129</strain>
    </source>
</reference>
<reference key="6">
    <citation type="journal article" date="2007" name="Proc. Natl. Acad. Sci. U.S.A.">
        <title>Large-scale phosphorylation analysis of mouse liver.</title>
        <authorList>
            <person name="Villen J."/>
            <person name="Beausoleil S.A."/>
            <person name="Gerber S.A."/>
            <person name="Gygi S.P."/>
        </authorList>
    </citation>
    <scope>PHOSPHORYLATION [LARGE SCALE ANALYSIS] AT SER-323; SER-333; SER-339 AND SER-343</scope>
    <scope>IDENTIFICATION BY MASS SPECTROMETRY [LARGE SCALE ANALYSIS]</scope>
    <source>
        <tissue>Liver</tissue>
    </source>
</reference>
<reference key="7">
    <citation type="journal article" date="2009" name="Mol. Cell. Proteomics">
        <title>Large scale localization of protein phosphorylation by use of electron capture dissociation mass spectrometry.</title>
        <authorList>
            <person name="Sweet S.M."/>
            <person name="Bailey C.M."/>
            <person name="Cunningham D.L."/>
            <person name="Heath J.K."/>
            <person name="Cooper H.J."/>
        </authorList>
    </citation>
    <scope>PHOSPHORYLATION [LARGE SCALE ANALYSIS] AT SER-339</scope>
    <scope>IDENTIFICATION BY MASS SPECTROMETRY [LARGE SCALE ANALYSIS]</scope>
    <source>
        <tissue>Embryonic fibroblast</tissue>
    </source>
</reference>
<reference key="8">
    <citation type="journal article" date="2010" name="Cell">
        <title>A tissue-specific atlas of mouse protein phosphorylation and expression.</title>
        <authorList>
            <person name="Huttlin E.L."/>
            <person name="Jedrychowski M.P."/>
            <person name="Elias J.E."/>
            <person name="Goswami T."/>
            <person name="Rad R."/>
            <person name="Beausoleil S.A."/>
            <person name="Villen J."/>
            <person name="Haas W."/>
            <person name="Sowa M.E."/>
            <person name="Gygi S.P."/>
        </authorList>
    </citation>
    <scope>PHOSPHORYLATION [LARGE SCALE ANALYSIS] AT TYR-300; SER-302; SER-305; SER-323; SER-333; SER-337; SER-339 AND SER-343</scope>
    <scope>IDENTIFICATION BY MASS SPECTROMETRY [LARGE SCALE ANALYSIS]</scope>
    <source>
        <tissue>Brain</tissue>
        <tissue>Brown adipose tissue</tissue>
        <tissue>Heart</tissue>
        <tissue>Kidney</tissue>
        <tissue>Liver</tissue>
        <tissue>Lung</tissue>
        <tissue>Pancreas</tissue>
        <tissue>Spleen</tissue>
        <tissue>Testis</tissue>
    </source>
</reference>
<protein>
    <recommendedName>
        <fullName>Nuclear factor 1 C-type</fullName>
        <shortName>NF1-C</shortName>
        <shortName>Nuclear factor 1/C</shortName>
    </recommendedName>
    <alternativeName>
        <fullName>CCAAT-box-binding transcription factor</fullName>
        <shortName>CTF</shortName>
    </alternativeName>
    <alternativeName>
        <fullName>Nuclear factor I/C</fullName>
        <shortName>NF-I/C</shortName>
        <shortName>NFI-C</shortName>
    </alternativeName>
    <alternativeName>
        <fullName>TGGCA-binding protein</fullName>
    </alternativeName>
</protein>
<sequence length="439" mass="48768">MYSSPLCLTQDEFHPFIEALLPHVRAFAYTWFNLQARKRKYFKKHEKRMSKDEERAVKDELLGEKAEVKQKWASRLLAKLRKDIRPECREDFVLAVTGKKAPGCVLSNPDQKGKMRRIDCLRQADKVWRLDLVMVILFKGIPLESTDGERLVKAAACAHPVLCVQPHHIGVAVKELDLYLAYFVRERDAEQSSSPRTGVGSDQEDSKPITLDTTDFQESFVTSGVFSVTELIQVSRTPVVTGTGPNFSLGELQGHLAYDLNPASAGMRRTLPSTSSSGSKRHKSGSMEEDVDTSPGGDYYTSPNSPTSSSRNWTEDIEGGISSPVKKTEMDKSPFNSPSPQDSPRLSSFTQHHRPVIAVHSGIARSPHPTSALHFPATPILPQTASTYFPHTAIRYPPHLNPQDPLKDLVSLACDPATQQPGPPALRPTRPLQTVPLWD</sequence>
<accession>P70255</accession>
<accession>O09072</accession>
<accession>P70256</accession>
<accession>Q3U2I9</accession>
<accession>Q99MA3</accession>
<accession>Q99MA4</accession>
<accession>Q99MA5</accession>
<accession>Q99MA6</accession>
<accession>Q99MA7</accession>
<accession>Q99MA8</accession>
<accession>Q9R1G3</accession>